<protein>
    <recommendedName>
        <fullName evidence="1">Endonuclease 8</fullName>
    </recommendedName>
    <alternativeName>
        <fullName evidence="1">DNA glycosylase/AP lyase Nei</fullName>
        <ecNumber evidence="1">3.2.2.-</ecNumber>
        <ecNumber evidence="1">4.2.99.18</ecNumber>
    </alternativeName>
    <alternativeName>
        <fullName evidence="1">DNA-(apurinic or apyrimidinic site) lyase Nei</fullName>
    </alternativeName>
    <alternativeName>
        <fullName evidence="1">Endonuclease VIII</fullName>
    </alternativeName>
</protein>
<sequence length="263" mass="29811">MPEGPEIRRAADNLEAAIKGKPLTDVWFAFPQLKTYQSQLIGQHVTHVETRGKALLTHFSNDLTLYSHNQLYGVWRVVDTGEESQTTRVLRVKLQTADKTILLYSASDIEMLTPEQLTTHPFLQRVGPDVLDPNLTPEVVKERLLSPRFRNRQFAGLLLDQAFLAGLGNYLRVEILWQVGLTGNHKAKDLNAAQLDALAHALLDIPRFSYATRGQVDENKHHGALFRFKVFHRDGELCERCGGIIEKTTLSSRPFYWCPGCQH</sequence>
<comment type="function">
    <text evidence="1">Involved in base excision repair of DNA damaged by oxidation or by mutagenic agents. Acts as a DNA glycosylase that recognizes and removes damaged bases. Has a preference for oxidized pyrimidines, such as thymine glycol, 5,6-dihydrouracil and 5,6-dihydrothymine. Has AP (apurinic/apyrimidinic) lyase activity and introduces nicks in the DNA strand. Cleaves the DNA backbone by beta-delta elimination to generate a single-strand break at the site of the removed base with both 3'- and 5'-phosphates.</text>
</comment>
<comment type="catalytic activity">
    <reaction evidence="1">
        <text>2'-deoxyribonucleotide-(2'-deoxyribose 5'-phosphate)-2'-deoxyribonucleotide-DNA = a 3'-end 2'-deoxyribonucleotide-(2,3-dehydro-2,3-deoxyribose 5'-phosphate)-DNA + a 5'-end 5'-phospho-2'-deoxyribonucleoside-DNA + H(+)</text>
        <dbReference type="Rhea" id="RHEA:66592"/>
        <dbReference type="Rhea" id="RHEA-COMP:13180"/>
        <dbReference type="Rhea" id="RHEA-COMP:16897"/>
        <dbReference type="Rhea" id="RHEA-COMP:17067"/>
        <dbReference type="ChEBI" id="CHEBI:15378"/>
        <dbReference type="ChEBI" id="CHEBI:136412"/>
        <dbReference type="ChEBI" id="CHEBI:157695"/>
        <dbReference type="ChEBI" id="CHEBI:167181"/>
        <dbReference type="EC" id="4.2.99.18"/>
    </reaction>
</comment>
<comment type="cofactor">
    <cofactor evidence="1">
        <name>Zn(2+)</name>
        <dbReference type="ChEBI" id="CHEBI:29105"/>
    </cofactor>
    <text evidence="1">Binds 1 zinc ion per subunit.</text>
</comment>
<comment type="similarity">
    <text evidence="1">Belongs to the FPG family.</text>
</comment>
<reference key="1">
    <citation type="journal article" date="2001" name="Nature">
        <title>Genome sequence of enterohaemorrhagic Escherichia coli O157:H7.</title>
        <authorList>
            <person name="Perna N.T."/>
            <person name="Plunkett G. III"/>
            <person name="Burland V."/>
            <person name="Mau B."/>
            <person name="Glasner J.D."/>
            <person name="Rose D.J."/>
            <person name="Mayhew G.F."/>
            <person name="Evans P.S."/>
            <person name="Gregor J."/>
            <person name="Kirkpatrick H.A."/>
            <person name="Posfai G."/>
            <person name="Hackett J."/>
            <person name="Klink S."/>
            <person name="Boutin A."/>
            <person name="Shao Y."/>
            <person name="Miller L."/>
            <person name="Grotbeck E.J."/>
            <person name="Davis N.W."/>
            <person name="Lim A."/>
            <person name="Dimalanta E.T."/>
            <person name="Potamousis K."/>
            <person name="Apodaca J."/>
            <person name="Anantharaman T.S."/>
            <person name="Lin J."/>
            <person name="Yen G."/>
            <person name="Schwartz D.C."/>
            <person name="Welch R.A."/>
            <person name="Blattner F.R."/>
        </authorList>
    </citation>
    <scope>NUCLEOTIDE SEQUENCE [LARGE SCALE GENOMIC DNA]</scope>
    <source>
        <strain>O157:H7 / EDL933 / ATCC 700927 / EHEC</strain>
    </source>
</reference>
<reference key="2">
    <citation type="journal article" date="2001" name="DNA Res.">
        <title>Complete genome sequence of enterohemorrhagic Escherichia coli O157:H7 and genomic comparison with a laboratory strain K-12.</title>
        <authorList>
            <person name="Hayashi T."/>
            <person name="Makino K."/>
            <person name="Ohnishi M."/>
            <person name="Kurokawa K."/>
            <person name="Ishii K."/>
            <person name="Yokoyama K."/>
            <person name="Han C.-G."/>
            <person name="Ohtsubo E."/>
            <person name="Nakayama K."/>
            <person name="Murata T."/>
            <person name="Tanaka M."/>
            <person name="Tobe T."/>
            <person name="Iida T."/>
            <person name="Takami H."/>
            <person name="Honda T."/>
            <person name="Sasakawa C."/>
            <person name="Ogasawara N."/>
            <person name="Yasunaga T."/>
            <person name="Kuhara S."/>
            <person name="Shiba T."/>
            <person name="Hattori M."/>
            <person name="Shinagawa H."/>
        </authorList>
    </citation>
    <scope>NUCLEOTIDE SEQUENCE [LARGE SCALE GENOMIC DNA]</scope>
    <source>
        <strain>O157:H7 / Sakai / RIMD 0509952 / EHEC</strain>
    </source>
</reference>
<evidence type="ECO:0000255" key="1">
    <source>
        <dbReference type="HAMAP-Rule" id="MF_01253"/>
    </source>
</evidence>
<accession>Q8X9C6</accession>
<dbReference type="EC" id="3.2.2.-" evidence="1"/>
<dbReference type="EC" id="4.2.99.18" evidence="1"/>
<dbReference type="EMBL" id="AE005174">
    <property type="protein sequence ID" value="AAG55037.1"/>
    <property type="molecule type" value="Genomic_DNA"/>
</dbReference>
<dbReference type="EMBL" id="BA000007">
    <property type="protein sequence ID" value="BAB34162.1"/>
    <property type="molecule type" value="Genomic_DNA"/>
</dbReference>
<dbReference type="PIR" id="A85572">
    <property type="entry name" value="A85572"/>
</dbReference>
<dbReference type="PIR" id="C90721">
    <property type="entry name" value="C90721"/>
</dbReference>
<dbReference type="RefSeq" id="NP_308766.1">
    <property type="nucleotide sequence ID" value="NC_002695.1"/>
</dbReference>
<dbReference type="RefSeq" id="WP_001114031.1">
    <property type="nucleotide sequence ID" value="NZ_VOAI01000019.1"/>
</dbReference>
<dbReference type="SMR" id="Q8X9C6"/>
<dbReference type="STRING" id="155864.Z0865"/>
<dbReference type="GeneID" id="917108"/>
<dbReference type="KEGG" id="ece:Z0865"/>
<dbReference type="KEGG" id="ecs:ECs_0739"/>
<dbReference type="PATRIC" id="fig|386585.9.peg.855"/>
<dbReference type="eggNOG" id="COG0266">
    <property type="taxonomic scope" value="Bacteria"/>
</dbReference>
<dbReference type="HOGENOM" id="CLU_038423_2_2_6"/>
<dbReference type="OMA" id="YKSELCF"/>
<dbReference type="Proteomes" id="UP000000558">
    <property type="component" value="Chromosome"/>
</dbReference>
<dbReference type="Proteomes" id="UP000002519">
    <property type="component" value="Chromosome"/>
</dbReference>
<dbReference type="GO" id="GO:0140078">
    <property type="term" value="F:class I DNA-(apurinic or apyrimidinic site) endonuclease activity"/>
    <property type="evidence" value="ECO:0007669"/>
    <property type="project" value="UniProtKB-EC"/>
</dbReference>
<dbReference type="GO" id="GO:0003684">
    <property type="term" value="F:damaged DNA binding"/>
    <property type="evidence" value="ECO:0007669"/>
    <property type="project" value="InterPro"/>
</dbReference>
<dbReference type="GO" id="GO:0000703">
    <property type="term" value="F:oxidized pyrimidine nucleobase lesion DNA N-glycosylase activity"/>
    <property type="evidence" value="ECO:0007669"/>
    <property type="project" value="UniProtKB-UniRule"/>
</dbReference>
<dbReference type="GO" id="GO:0008270">
    <property type="term" value="F:zinc ion binding"/>
    <property type="evidence" value="ECO:0007669"/>
    <property type="project" value="UniProtKB-UniRule"/>
</dbReference>
<dbReference type="GO" id="GO:0006284">
    <property type="term" value="P:base-excision repair"/>
    <property type="evidence" value="ECO:0007669"/>
    <property type="project" value="InterPro"/>
</dbReference>
<dbReference type="CDD" id="cd08965">
    <property type="entry name" value="EcNei-like_N"/>
    <property type="match status" value="1"/>
</dbReference>
<dbReference type="FunFam" id="1.10.8.50:FF:000005">
    <property type="entry name" value="Endonuclease 8"/>
    <property type="match status" value="1"/>
</dbReference>
<dbReference type="FunFam" id="3.20.190.10:FF:000002">
    <property type="entry name" value="Endonuclease 8"/>
    <property type="match status" value="1"/>
</dbReference>
<dbReference type="Gene3D" id="1.10.8.50">
    <property type="match status" value="1"/>
</dbReference>
<dbReference type="Gene3D" id="3.20.190.10">
    <property type="entry name" value="MutM-like, N-terminal"/>
    <property type="match status" value="1"/>
</dbReference>
<dbReference type="HAMAP" id="MF_01253">
    <property type="entry name" value="Endonuclease_8"/>
    <property type="match status" value="1"/>
</dbReference>
<dbReference type="InterPro" id="IPR015886">
    <property type="entry name" value="DNA_glyclase/AP_lyase_DNA-bd"/>
</dbReference>
<dbReference type="InterPro" id="IPR015887">
    <property type="entry name" value="DNA_glyclase_Znf_dom_DNA_BS"/>
</dbReference>
<dbReference type="InterPro" id="IPR044091">
    <property type="entry name" value="EcNei-like_N"/>
</dbReference>
<dbReference type="InterPro" id="IPR023713">
    <property type="entry name" value="Endonuclease-VIII"/>
</dbReference>
<dbReference type="InterPro" id="IPR012319">
    <property type="entry name" value="FPG_cat"/>
</dbReference>
<dbReference type="InterPro" id="IPR035937">
    <property type="entry name" value="MutM-like_N-ter"/>
</dbReference>
<dbReference type="InterPro" id="IPR010979">
    <property type="entry name" value="Ribosomal_uS13-like_H2TH"/>
</dbReference>
<dbReference type="InterPro" id="IPR000214">
    <property type="entry name" value="Znf_DNA_glyclase/AP_lyase"/>
</dbReference>
<dbReference type="InterPro" id="IPR010663">
    <property type="entry name" value="Znf_FPG/IleRS"/>
</dbReference>
<dbReference type="NCBIfam" id="NF007763">
    <property type="entry name" value="PRK10445.1"/>
    <property type="match status" value="1"/>
</dbReference>
<dbReference type="PANTHER" id="PTHR42697">
    <property type="entry name" value="ENDONUCLEASE 8"/>
    <property type="match status" value="1"/>
</dbReference>
<dbReference type="PANTHER" id="PTHR42697:SF1">
    <property type="entry name" value="ENDONUCLEASE 8"/>
    <property type="match status" value="1"/>
</dbReference>
<dbReference type="Pfam" id="PF01149">
    <property type="entry name" value="Fapy_DNA_glyco"/>
    <property type="match status" value="1"/>
</dbReference>
<dbReference type="Pfam" id="PF06831">
    <property type="entry name" value="H2TH"/>
    <property type="match status" value="1"/>
</dbReference>
<dbReference type="Pfam" id="PF06827">
    <property type="entry name" value="zf-FPG_IleRS"/>
    <property type="match status" value="1"/>
</dbReference>
<dbReference type="SMART" id="SM00898">
    <property type="entry name" value="Fapy_DNA_glyco"/>
    <property type="match status" value="1"/>
</dbReference>
<dbReference type="SMART" id="SM01232">
    <property type="entry name" value="H2TH"/>
    <property type="match status" value="1"/>
</dbReference>
<dbReference type="SUPFAM" id="SSF57716">
    <property type="entry name" value="Glucocorticoid receptor-like (DNA-binding domain)"/>
    <property type="match status" value="1"/>
</dbReference>
<dbReference type="SUPFAM" id="SSF81624">
    <property type="entry name" value="N-terminal domain of MutM-like DNA repair proteins"/>
    <property type="match status" value="1"/>
</dbReference>
<dbReference type="SUPFAM" id="SSF46946">
    <property type="entry name" value="S13-like H2TH domain"/>
    <property type="match status" value="1"/>
</dbReference>
<dbReference type="PROSITE" id="PS51068">
    <property type="entry name" value="FPG_CAT"/>
    <property type="match status" value="1"/>
</dbReference>
<dbReference type="PROSITE" id="PS01242">
    <property type="entry name" value="ZF_FPG_1"/>
    <property type="match status" value="1"/>
</dbReference>
<dbReference type="PROSITE" id="PS51066">
    <property type="entry name" value="ZF_FPG_2"/>
    <property type="match status" value="1"/>
</dbReference>
<keyword id="KW-0227">DNA damage</keyword>
<keyword id="KW-0234">DNA repair</keyword>
<keyword id="KW-0238">DNA-binding</keyword>
<keyword id="KW-0326">Glycosidase</keyword>
<keyword id="KW-0378">Hydrolase</keyword>
<keyword id="KW-0456">Lyase</keyword>
<keyword id="KW-0479">Metal-binding</keyword>
<keyword id="KW-0511">Multifunctional enzyme</keyword>
<keyword id="KW-1185">Reference proteome</keyword>
<keyword id="KW-0862">Zinc</keyword>
<keyword id="KW-0863">Zinc-finger</keyword>
<gene>
    <name evidence="1" type="primary">nei</name>
    <name type="ordered locus">Z0865</name>
    <name type="ordered locus">ECs0739</name>
</gene>
<organism>
    <name type="scientific">Escherichia coli O157:H7</name>
    <dbReference type="NCBI Taxonomy" id="83334"/>
    <lineage>
        <taxon>Bacteria</taxon>
        <taxon>Pseudomonadati</taxon>
        <taxon>Pseudomonadota</taxon>
        <taxon>Gammaproteobacteria</taxon>
        <taxon>Enterobacterales</taxon>
        <taxon>Enterobacteriaceae</taxon>
        <taxon>Escherichia</taxon>
    </lineage>
</organism>
<feature type="initiator methionine" description="Removed" evidence="1">
    <location>
        <position position="1"/>
    </location>
</feature>
<feature type="chain" id="PRO_0000170895" description="Endonuclease 8">
    <location>
        <begin position="2"/>
        <end position="263"/>
    </location>
</feature>
<feature type="zinc finger region" description="FPG-type" evidence="1">
    <location>
        <begin position="229"/>
        <end position="263"/>
    </location>
</feature>
<feature type="active site" description="Schiff-base intermediate with DNA" evidence="1">
    <location>
        <position position="2"/>
    </location>
</feature>
<feature type="active site" description="Proton donor" evidence="1">
    <location>
        <position position="3"/>
    </location>
</feature>
<feature type="active site" description="Proton donor; for beta-elimination activity" evidence="1">
    <location>
        <position position="53"/>
    </location>
</feature>
<feature type="active site" description="Proton donor; for delta-elimination activity" evidence="1">
    <location>
        <position position="253"/>
    </location>
</feature>
<feature type="binding site" evidence="1">
    <location>
        <position position="70"/>
    </location>
    <ligand>
        <name>DNA</name>
        <dbReference type="ChEBI" id="CHEBI:16991"/>
    </ligand>
</feature>
<feature type="binding site" evidence="1">
    <location>
        <position position="125"/>
    </location>
    <ligand>
        <name>DNA</name>
        <dbReference type="ChEBI" id="CHEBI:16991"/>
    </ligand>
</feature>
<feature type="binding site" evidence="1">
    <location>
        <position position="169"/>
    </location>
    <ligand>
        <name>DNA</name>
        <dbReference type="ChEBI" id="CHEBI:16991"/>
    </ligand>
</feature>
<proteinExistence type="inferred from homology"/>
<name>END8_ECO57</name>